<evidence type="ECO:0000255" key="1">
    <source>
        <dbReference type="HAMAP-Rule" id="MF_03140"/>
    </source>
</evidence>
<comment type="function">
    <text evidence="1">Structure-specific nuclease with 5'-flap endonuclease and 5'-3' exonuclease activities involved in DNA replication and repair. During DNA replication, cleaves the 5'-overhanging flap structure that is generated by displacement synthesis when DNA polymerase encounters the 5'-end of a downstream Okazaki fragment. It enters the flap from the 5'-end and then tracks to cleave the flap base, leaving a nick for ligation. Also involved in the long patch base excision repair (LP-BER) pathway, by cleaving within the apurinic/apyrimidinic (AP) site-terminated flap. Acts as a genome stabilization factor that prevents flaps from equilibrating into structures that lead to duplications and deletions. Also possesses 5'-3' exonuclease activity on nicked or gapped double-stranded DNA, and exhibits RNase H activity. Also involved in replication and repair of rDNA and in repairing mitochondrial DNA.</text>
</comment>
<comment type="cofactor">
    <cofactor evidence="1">
        <name>Mg(2+)</name>
        <dbReference type="ChEBI" id="CHEBI:18420"/>
    </cofactor>
    <text evidence="1">Binds 2 magnesium ions per subunit. They probably participate in the reaction catalyzed by the enzyme. May bind an additional third magnesium ion after substrate binding.</text>
</comment>
<comment type="subunit">
    <text evidence="1">Interacts with PCNA. Three molecules of RAD27 bind to one PCNA trimer with each molecule binding to one PCNA monomer. PCNA stimulates the nuclease activity without altering cleavage specificity.</text>
</comment>
<comment type="subcellular location">
    <subcellularLocation>
        <location evidence="1">Nucleus</location>
        <location evidence="1">Nucleolus</location>
    </subcellularLocation>
    <subcellularLocation>
        <location evidence="1">Nucleus</location>
        <location evidence="1">Nucleoplasm</location>
    </subcellularLocation>
    <subcellularLocation>
        <location evidence="1">Mitochondrion</location>
    </subcellularLocation>
    <text evidence="1">Resides mostly in the nucleoli and relocalizes to the nucleoplasm upon DNA damage.</text>
</comment>
<comment type="PTM">
    <text evidence="1">Phosphorylated. Phosphorylation upon DNA damage induces relocalization to the nuclear plasma.</text>
</comment>
<comment type="similarity">
    <text evidence="1">Belongs to the XPG/RAD2 endonuclease family. FEN1 subfamily.</text>
</comment>
<organism>
    <name type="scientific">Candida dubliniensis (strain CD36 / ATCC MYA-646 / CBS 7987 / NCPF 3949 / NRRL Y-17841)</name>
    <name type="common">Yeast</name>
    <dbReference type="NCBI Taxonomy" id="573826"/>
    <lineage>
        <taxon>Eukaryota</taxon>
        <taxon>Fungi</taxon>
        <taxon>Dikarya</taxon>
        <taxon>Ascomycota</taxon>
        <taxon>Saccharomycotina</taxon>
        <taxon>Pichiomycetes</taxon>
        <taxon>Debaryomycetaceae</taxon>
        <taxon>Candida/Lodderomyces clade</taxon>
        <taxon>Candida</taxon>
    </lineage>
</organism>
<sequence>MGVKGLNQLIKEHSPSAYKEFQLKNLFGRKVAIDASMCLYQFLIAVRQSDGQQLTNEDGETTSHLSGMFYRTIKMVENNIKPVYVFDGKPPVLKGGELEKRLLRREEAQKQKTALGDEGTVEEVLKFEKRLVRVTREQNEEAKKLLELMGIPCVDAPCEAEAQCAELARGGKVYAAASEDMDTLCYEPPFLLRHLTFSEARKMPIDQIEYKDAIAGLDMTKEQFIDLCILLGCDYCESIKGIGQATAFKLIKEHGSLDNIVEWIKNNKTKYTLPENWPYDEARQLFMNPEVTNANEISLKWKEPDVDGLIEFMVRQKGFSEDRIRSGAEKLKKGLKGGVQGRLDGFFKVVKNDDKKRKADPKETKSSKKKRR</sequence>
<keyword id="KW-0227">DNA damage</keyword>
<keyword id="KW-0234">DNA repair</keyword>
<keyword id="KW-0235">DNA replication</keyword>
<keyword id="KW-0255">Endonuclease</keyword>
<keyword id="KW-0269">Exonuclease</keyword>
<keyword id="KW-0378">Hydrolase</keyword>
<keyword id="KW-0460">Magnesium</keyword>
<keyword id="KW-0479">Metal-binding</keyword>
<keyword id="KW-0496">Mitochondrion</keyword>
<keyword id="KW-0540">Nuclease</keyword>
<keyword id="KW-0539">Nucleus</keyword>
<keyword id="KW-0597">Phosphoprotein</keyword>
<dbReference type="EC" id="3.1.-.-" evidence="1"/>
<dbReference type="EMBL" id="FM992695">
    <property type="protein sequence ID" value="CAX40017.1"/>
    <property type="molecule type" value="Genomic_DNA"/>
</dbReference>
<dbReference type="RefSeq" id="XP_002422016.1">
    <property type="nucleotide sequence ID" value="XM_002421971.1"/>
</dbReference>
<dbReference type="SMR" id="B9WLQ5"/>
<dbReference type="GeneID" id="8050132"/>
<dbReference type="KEGG" id="cdu:CD36_29920"/>
<dbReference type="CGD" id="CAL0000163748">
    <property type="gene designation" value="Cd36_29920"/>
</dbReference>
<dbReference type="eggNOG" id="KOG2519">
    <property type="taxonomic scope" value="Eukaryota"/>
</dbReference>
<dbReference type="HOGENOM" id="CLU_032444_2_0_1"/>
<dbReference type="OrthoDB" id="1937206at2759"/>
<dbReference type="Proteomes" id="UP000002605">
    <property type="component" value="Chromosome R"/>
</dbReference>
<dbReference type="GO" id="GO:0005739">
    <property type="term" value="C:mitochondrion"/>
    <property type="evidence" value="ECO:0007669"/>
    <property type="project" value="UniProtKB-SubCell"/>
</dbReference>
<dbReference type="GO" id="GO:0005730">
    <property type="term" value="C:nucleolus"/>
    <property type="evidence" value="ECO:0007669"/>
    <property type="project" value="UniProtKB-SubCell"/>
</dbReference>
<dbReference type="GO" id="GO:0005654">
    <property type="term" value="C:nucleoplasm"/>
    <property type="evidence" value="ECO:0007669"/>
    <property type="project" value="UniProtKB-SubCell"/>
</dbReference>
<dbReference type="GO" id="GO:0008409">
    <property type="term" value="F:5'-3' exonuclease activity"/>
    <property type="evidence" value="ECO:0007669"/>
    <property type="project" value="UniProtKB-UniRule"/>
</dbReference>
<dbReference type="GO" id="GO:0017108">
    <property type="term" value="F:5'-flap endonuclease activity"/>
    <property type="evidence" value="ECO:0007669"/>
    <property type="project" value="UniProtKB-UniRule"/>
</dbReference>
<dbReference type="GO" id="GO:0003677">
    <property type="term" value="F:DNA binding"/>
    <property type="evidence" value="ECO:0007669"/>
    <property type="project" value="UniProtKB-UniRule"/>
</dbReference>
<dbReference type="GO" id="GO:0000287">
    <property type="term" value="F:magnesium ion binding"/>
    <property type="evidence" value="ECO:0007669"/>
    <property type="project" value="UniProtKB-UniRule"/>
</dbReference>
<dbReference type="GO" id="GO:0006284">
    <property type="term" value="P:base-excision repair"/>
    <property type="evidence" value="ECO:0007669"/>
    <property type="project" value="UniProtKB-UniRule"/>
</dbReference>
<dbReference type="GO" id="GO:0043137">
    <property type="term" value="P:DNA replication, removal of RNA primer"/>
    <property type="evidence" value="ECO:0007669"/>
    <property type="project" value="UniProtKB-UniRule"/>
</dbReference>
<dbReference type="CDD" id="cd09907">
    <property type="entry name" value="H3TH_FEN1-Euk"/>
    <property type="match status" value="1"/>
</dbReference>
<dbReference type="CDD" id="cd09867">
    <property type="entry name" value="PIN_FEN1"/>
    <property type="match status" value="1"/>
</dbReference>
<dbReference type="FunFam" id="1.10.150.20:FF:000009">
    <property type="entry name" value="Flap endonuclease 1"/>
    <property type="match status" value="1"/>
</dbReference>
<dbReference type="FunFam" id="3.40.50.1010:FF:000003">
    <property type="entry name" value="Flap endonuclease 1"/>
    <property type="match status" value="1"/>
</dbReference>
<dbReference type="Gene3D" id="1.10.150.20">
    <property type="entry name" value="5' to 3' exonuclease, C-terminal subdomain"/>
    <property type="match status" value="1"/>
</dbReference>
<dbReference type="Gene3D" id="3.40.50.1010">
    <property type="entry name" value="5'-nuclease"/>
    <property type="match status" value="1"/>
</dbReference>
<dbReference type="HAMAP" id="MF_00614">
    <property type="entry name" value="Fen"/>
    <property type="match status" value="1"/>
</dbReference>
<dbReference type="InterPro" id="IPR036279">
    <property type="entry name" value="5-3_exonuclease_C_sf"/>
</dbReference>
<dbReference type="InterPro" id="IPR023426">
    <property type="entry name" value="Flap_endonuc"/>
</dbReference>
<dbReference type="InterPro" id="IPR008918">
    <property type="entry name" value="HhH2"/>
</dbReference>
<dbReference type="InterPro" id="IPR029060">
    <property type="entry name" value="PIN-like_dom_sf"/>
</dbReference>
<dbReference type="InterPro" id="IPR006086">
    <property type="entry name" value="XPG-I_dom"/>
</dbReference>
<dbReference type="InterPro" id="IPR006084">
    <property type="entry name" value="XPG/Rad2"/>
</dbReference>
<dbReference type="InterPro" id="IPR019974">
    <property type="entry name" value="XPG_CS"/>
</dbReference>
<dbReference type="InterPro" id="IPR006085">
    <property type="entry name" value="XPG_DNA_repair_N"/>
</dbReference>
<dbReference type="PANTHER" id="PTHR11081:SF9">
    <property type="entry name" value="FLAP ENDONUCLEASE 1"/>
    <property type="match status" value="1"/>
</dbReference>
<dbReference type="PANTHER" id="PTHR11081">
    <property type="entry name" value="FLAP ENDONUCLEASE FAMILY MEMBER"/>
    <property type="match status" value="1"/>
</dbReference>
<dbReference type="Pfam" id="PF00867">
    <property type="entry name" value="XPG_I"/>
    <property type="match status" value="1"/>
</dbReference>
<dbReference type="Pfam" id="PF00752">
    <property type="entry name" value="XPG_N"/>
    <property type="match status" value="1"/>
</dbReference>
<dbReference type="PRINTS" id="PR00853">
    <property type="entry name" value="XPGRADSUPER"/>
</dbReference>
<dbReference type="SMART" id="SM00279">
    <property type="entry name" value="HhH2"/>
    <property type="match status" value="1"/>
</dbReference>
<dbReference type="SMART" id="SM00484">
    <property type="entry name" value="XPGI"/>
    <property type="match status" value="1"/>
</dbReference>
<dbReference type="SMART" id="SM00485">
    <property type="entry name" value="XPGN"/>
    <property type="match status" value="1"/>
</dbReference>
<dbReference type="SUPFAM" id="SSF47807">
    <property type="entry name" value="5' to 3' exonuclease, C-terminal subdomain"/>
    <property type="match status" value="1"/>
</dbReference>
<dbReference type="SUPFAM" id="SSF88723">
    <property type="entry name" value="PIN domain-like"/>
    <property type="match status" value="1"/>
</dbReference>
<dbReference type="PROSITE" id="PS00841">
    <property type="entry name" value="XPG_1"/>
    <property type="match status" value="1"/>
</dbReference>
<dbReference type="PROSITE" id="PS00842">
    <property type="entry name" value="XPG_2"/>
    <property type="match status" value="1"/>
</dbReference>
<feature type="chain" id="PRO_0000403568" description="Flap endonuclease 1">
    <location>
        <begin position="1"/>
        <end position="372"/>
    </location>
</feature>
<feature type="region of interest" description="N-domain">
    <location>
        <begin position="1"/>
        <end position="105"/>
    </location>
</feature>
<feature type="region of interest" description="I-domain">
    <location>
        <begin position="123"/>
        <end position="254"/>
    </location>
</feature>
<feature type="region of interest" description="Interaction with PCNA" evidence="1">
    <location>
        <begin position="339"/>
        <end position="347"/>
    </location>
</feature>
<feature type="binding site" evidence="1">
    <location>
        <position position="34"/>
    </location>
    <ligand>
        <name>Mg(2+)</name>
        <dbReference type="ChEBI" id="CHEBI:18420"/>
        <label>1</label>
    </ligand>
</feature>
<feature type="binding site" evidence="1">
    <location>
        <position position="47"/>
    </location>
    <ligand>
        <name>DNA</name>
        <dbReference type="ChEBI" id="CHEBI:16991"/>
    </ligand>
</feature>
<feature type="binding site" evidence="1">
    <location>
        <position position="71"/>
    </location>
    <ligand>
        <name>DNA</name>
        <dbReference type="ChEBI" id="CHEBI:16991"/>
    </ligand>
</feature>
<feature type="binding site" evidence="1">
    <location>
        <position position="87"/>
    </location>
    <ligand>
        <name>Mg(2+)</name>
        <dbReference type="ChEBI" id="CHEBI:18420"/>
        <label>1</label>
    </ligand>
</feature>
<feature type="binding site" evidence="1">
    <location>
        <position position="159"/>
    </location>
    <ligand>
        <name>DNA</name>
        <dbReference type="ChEBI" id="CHEBI:16991"/>
    </ligand>
</feature>
<feature type="binding site" evidence="1">
    <location>
        <position position="159"/>
    </location>
    <ligand>
        <name>Mg(2+)</name>
        <dbReference type="ChEBI" id="CHEBI:18420"/>
        <label>1</label>
    </ligand>
</feature>
<feature type="binding site" evidence="1">
    <location>
        <position position="161"/>
    </location>
    <ligand>
        <name>Mg(2+)</name>
        <dbReference type="ChEBI" id="CHEBI:18420"/>
        <label>1</label>
    </ligand>
</feature>
<feature type="binding site" evidence="1">
    <location>
        <position position="180"/>
    </location>
    <ligand>
        <name>Mg(2+)</name>
        <dbReference type="ChEBI" id="CHEBI:18420"/>
        <label>2</label>
    </ligand>
</feature>
<feature type="binding site" evidence="1">
    <location>
        <position position="182"/>
    </location>
    <ligand>
        <name>Mg(2+)</name>
        <dbReference type="ChEBI" id="CHEBI:18420"/>
        <label>2</label>
    </ligand>
</feature>
<feature type="binding site" evidence="1">
    <location>
        <position position="232"/>
    </location>
    <ligand>
        <name>DNA</name>
        <dbReference type="ChEBI" id="CHEBI:16991"/>
    </ligand>
</feature>
<feature type="binding site" evidence="1">
    <location>
        <position position="234"/>
    </location>
    <ligand>
        <name>DNA</name>
        <dbReference type="ChEBI" id="CHEBI:16991"/>
    </ligand>
</feature>
<feature type="binding site" evidence="1">
    <location>
        <position position="234"/>
    </location>
    <ligand>
        <name>Mg(2+)</name>
        <dbReference type="ChEBI" id="CHEBI:18420"/>
        <label>2</label>
    </ligand>
</feature>
<protein>
    <recommendedName>
        <fullName evidence="1">Flap endonuclease 1</fullName>
        <shortName evidence="1">FEN-1</shortName>
        <ecNumber evidence="1">3.1.-.-</ecNumber>
    </recommendedName>
    <alternativeName>
        <fullName evidence="1">Flap structure-specific endonuclease 1</fullName>
    </alternativeName>
</protein>
<gene>
    <name evidence="1" type="primary">RAD27</name>
    <name evidence="1" type="synonym">FEN1</name>
    <name type="ORF">CD36_29920</name>
</gene>
<accession>B9WLQ5</accession>
<proteinExistence type="inferred from homology"/>
<reference key="1">
    <citation type="journal article" date="2009" name="Genome Res.">
        <title>Comparative genomics of the fungal pathogens Candida dubliniensis and Candida albicans.</title>
        <authorList>
            <person name="Jackson A.P."/>
            <person name="Gamble J.A."/>
            <person name="Yeomans T."/>
            <person name="Moran G.P."/>
            <person name="Saunders D."/>
            <person name="Harris D."/>
            <person name="Aslett M."/>
            <person name="Barrell J.F."/>
            <person name="Butler G."/>
            <person name="Citiulo F."/>
            <person name="Coleman D.C."/>
            <person name="de Groot P.W.J."/>
            <person name="Goodwin T.J."/>
            <person name="Quail M.A."/>
            <person name="McQuillan J."/>
            <person name="Munro C.A."/>
            <person name="Pain A."/>
            <person name="Poulter R.T."/>
            <person name="Rajandream M.A."/>
            <person name="Renauld H."/>
            <person name="Spiering M.J."/>
            <person name="Tivey A."/>
            <person name="Gow N.A.R."/>
            <person name="Barrell B."/>
            <person name="Sullivan D.J."/>
            <person name="Berriman M."/>
        </authorList>
    </citation>
    <scope>NUCLEOTIDE SEQUENCE [LARGE SCALE GENOMIC DNA]</scope>
    <source>
        <strain>CD36 / ATCC MYA-646 / CBS 7987 / NCPF 3949 / NRRL Y-17841</strain>
    </source>
</reference>
<name>FEN1_CANDC</name>